<sequence>MSERHLFTSESVSEGHPDKIADQISDSILDELLKNDPDARVACETTVTTGLVVVVGEISTTAYIDIQKVVRKTIKDIGYVGGEYGFDGENCAVIVAIDEQSPDIAQGVDDSLETREGHEDRLNQIGAGDQGLMFGYATNETEELMPLPIMLSHHLMQRIAKLRKEQVISYLRPDAKAEVTVEYDDNDHPVRVDTVVLSTQHDPDVTLEQIRQDVIEQVIKAVIPATLLDENTNFYINPTGRFVIGGPQGDAGLTGRKIIVDTYGGAARHGGGAFSGKDATKVDRSASYAARYIAKNIVAAKLAERVEVQIAYAIGVAEPVSVMVDTFGTGTVSEEKLTQAVRKIFDLRPAGIIEMLDLKRPIYKQTAAYGHFGRTDVELPWEKTDKVEALNDFFKN</sequence>
<dbReference type="EC" id="2.5.1.6" evidence="1"/>
<dbReference type="EMBL" id="CP000422">
    <property type="protein sequence ID" value="ABJ67704.1"/>
    <property type="molecule type" value="Genomic_DNA"/>
</dbReference>
<dbReference type="RefSeq" id="WP_002833742.1">
    <property type="nucleotide sequence ID" value="NC_008525.1"/>
</dbReference>
<dbReference type="SMR" id="Q03GG8"/>
<dbReference type="STRING" id="278197.PEPE_0641"/>
<dbReference type="GeneID" id="33061500"/>
<dbReference type="KEGG" id="ppe:PEPE_0641"/>
<dbReference type="eggNOG" id="COG0192">
    <property type="taxonomic scope" value="Bacteria"/>
</dbReference>
<dbReference type="HOGENOM" id="CLU_041802_1_1_9"/>
<dbReference type="OrthoDB" id="9801686at2"/>
<dbReference type="UniPathway" id="UPA00315">
    <property type="reaction ID" value="UER00080"/>
</dbReference>
<dbReference type="Proteomes" id="UP000000773">
    <property type="component" value="Chromosome"/>
</dbReference>
<dbReference type="GO" id="GO:0005737">
    <property type="term" value="C:cytoplasm"/>
    <property type="evidence" value="ECO:0007669"/>
    <property type="project" value="UniProtKB-SubCell"/>
</dbReference>
<dbReference type="GO" id="GO:0005524">
    <property type="term" value="F:ATP binding"/>
    <property type="evidence" value="ECO:0007669"/>
    <property type="project" value="UniProtKB-UniRule"/>
</dbReference>
<dbReference type="GO" id="GO:0000287">
    <property type="term" value="F:magnesium ion binding"/>
    <property type="evidence" value="ECO:0007669"/>
    <property type="project" value="UniProtKB-UniRule"/>
</dbReference>
<dbReference type="GO" id="GO:0004478">
    <property type="term" value="F:methionine adenosyltransferase activity"/>
    <property type="evidence" value="ECO:0007669"/>
    <property type="project" value="UniProtKB-UniRule"/>
</dbReference>
<dbReference type="GO" id="GO:0006730">
    <property type="term" value="P:one-carbon metabolic process"/>
    <property type="evidence" value="ECO:0007669"/>
    <property type="project" value="UniProtKB-KW"/>
</dbReference>
<dbReference type="GO" id="GO:0006556">
    <property type="term" value="P:S-adenosylmethionine biosynthetic process"/>
    <property type="evidence" value="ECO:0007669"/>
    <property type="project" value="UniProtKB-UniRule"/>
</dbReference>
<dbReference type="CDD" id="cd18079">
    <property type="entry name" value="S-AdoMet_synt"/>
    <property type="match status" value="1"/>
</dbReference>
<dbReference type="FunFam" id="3.30.300.10:FF:000003">
    <property type="entry name" value="S-adenosylmethionine synthase"/>
    <property type="match status" value="1"/>
</dbReference>
<dbReference type="FunFam" id="3.30.300.10:FF:000004">
    <property type="entry name" value="S-adenosylmethionine synthase"/>
    <property type="match status" value="1"/>
</dbReference>
<dbReference type="FunFam" id="3.30.300.10:FF:000011">
    <property type="entry name" value="S-adenosylmethionine synthase"/>
    <property type="match status" value="1"/>
</dbReference>
<dbReference type="Gene3D" id="3.30.300.10">
    <property type="match status" value="3"/>
</dbReference>
<dbReference type="HAMAP" id="MF_00086">
    <property type="entry name" value="S_AdoMet_synth1"/>
    <property type="match status" value="1"/>
</dbReference>
<dbReference type="InterPro" id="IPR022631">
    <property type="entry name" value="ADOMET_SYNTHASE_CS"/>
</dbReference>
<dbReference type="InterPro" id="IPR022630">
    <property type="entry name" value="S-AdoMet_synt_C"/>
</dbReference>
<dbReference type="InterPro" id="IPR022629">
    <property type="entry name" value="S-AdoMet_synt_central"/>
</dbReference>
<dbReference type="InterPro" id="IPR022628">
    <property type="entry name" value="S-AdoMet_synt_N"/>
</dbReference>
<dbReference type="InterPro" id="IPR002133">
    <property type="entry name" value="S-AdoMet_synthetase"/>
</dbReference>
<dbReference type="InterPro" id="IPR022636">
    <property type="entry name" value="S-AdoMet_synthetase_sfam"/>
</dbReference>
<dbReference type="NCBIfam" id="TIGR01034">
    <property type="entry name" value="metK"/>
    <property type="match status" value="1"/>
</dbReference>
<dbReference type="PANTHER" id="PTHR11964">
    <property type="entry name" value="S-ADENOSYLMETHIONINE SYNTHETASE"/>
    <property type="match status" value="1"/>
</dbReference>
<dbReference type="Pfam" id="PF02773">
    <property type="entry name" value="S-AdoMet_synt_C"/>
    <property type="match status" value="1"/>
</dbReference>
<dbReference type="Pfam" id="PF02772">
    <property type="entry name" value="S-AdoMet_synt_M"/>
    <property type="match status" value="1"/>
</dbReference>
<dbReference type="Pfam" id="PF00438">
    <property type="entry name" value="S-AdoMet_synt_N"/>
    <property type="match status" value="1"/>
</dbReference>
<dbReference type="PIRSF" id="PIRSF000497">
    <property type="entry name" value="MAT"/>
    <property type="match status" value="1"/>
</dbReference>
<dbReference type="SUPFAM" id="SSF55973">
    <property type="entry name" value="S-adenosylmethionine synthetase"/>
    <property type="match status" value="3"/>
</dbReference>
<dbReference type="PROSITE" id="PS00376">
    <property type="entry name" value="ADOMET_SYNTHASE_1"/>
    <property type="match status" value="1"/>
</dbReference>
<dbReference type="PROSITE" id="PS00377">
    <property type="entry name" value="ADOMET_SYNTHASE_2"/>
    <property type="match status" value="1"/>
</dbReference>
<proteinExistence type="inferred from homology"/>
<evidence type="ECO:0000255" key="1">
    <source>
        <dbReference type="HAMAP-Rule" id="MF_00086"/>
    </source>
</evidence>
<reference key="1">
    <citation type="journal article" date="2006" name="Proc. Natl. Acad. Sci. U.S.A.">
        <title>Comparative genomics of the lactic acid bacteria.</title>
        <authorList>
            <person name="Makarova K.S."/>
            <person name="Slesarev A."/>
            <person name="Wolf Y.I."/>
            <person name="Sorokin A."/>
            <person name="Mirkin B."/>
            <person name="Koonin E.V."/>
            <person name="Pavlov A."/>
            <person name="Pavlova N."/>
            <person name="Karamychev V."/>
            <person name="Polouchine N."/>
            <person name="Shakhova V."/>
            <person name="Grigoriev I."/>
            <person name="Lou Y."/>
            <person name="Rohksar D."/>
            <person name="Lucas S."/>
            <person name="Huang K."/>
            <person name="Goodstein D.M."/>
            <person name="Hawkins T."/>
            <person name="Plengvidhya V."/>
            <person name="Welker D."/>
            <person name="Hughes J."/>
            <person name="Goh Y."/>
            <person name="Benson A."/>
            <person name="Baldwin K."/>
            <person name="Lee J.-H."/>
            <person name="Diaz-Muniz I."/>
            <person name="Dosti B."/>
            <person name="Smeianov V."/>
            <person name="Wechter W."/>
            <person name="Barabote R."/>
            <person name="Lorca G."/>
            <person name="Altermann E."/>
            <person name="Barrangou R."/>
            <person name="Ganesan B."/>
            <person name="Xie Y."/>
            <person name="Rawsthorne H."/>
            <person name="Tamir D."/>
            <person name="Parker C."/>
            <person name="Breidt F."/>
            <person name="Broadbent J.R."/>
            <person name="Hutkins R."/>
            <person name="O'Sullivan D."/>
            <person name="Steele J."/>
            <person name="Unlu G."/>
            <person name="Saier M.H. Jr."/>
            <person name="Klaenhammer T."/>
            <person name="Richardson P."/>
            <person name="Kozyavkin S."/>
            <person name="Weimer B.C."/>
            <person name="Mills D.A."/>
        </authorList>
    </citation>
    <scope>NUCLEOTIDE SEQUENCE [LARGE SCALE GENOMIC DNA]</scope>
    <source>
        <strain>ATCC 25745 / CCUG 21536 / LMG 10740 / 183-1w</strain>
    </source>
</reference>
<feature type="chain" id="PRO_0000302955" description="S-adenosylmethionine synthase">
    <location>
        <begin position="1"/>
        <end position="396"/>
    </location>
</feature>
<feature type="region of interest" description="Flexible loop" evidence="1">
    <location>
        <begin position="100"/>
        <end position="110"/>
    </location>
</feature>
<feature type="binding site" description="in other chain" evidence="1">
    <location>
        <position position="16"/>
    </location>
    <ligand>
        <name>ATP</name>
        <dbReference type="ChEBI" id="CHEBI:30616"/>
        <note>ligand shared between two neighboring subunits</note>
    </ligand>
</feature>
<feature type="binding site" evidence="1">
    <location>
        <position position="18"/>
    </location>
    <ligand>
        <name>Mg(2+)</name>
        <dbReference type="ChEBI" id="CHEBI:18420"/>
    </ligand>
</feature>
<feature type="binding site" evidence="1">
    <location>
        <position position="44"/>
    </location>
    <ligand>
        <name>K(+)</name>
        <dbReference type="ChEBI" id="CHEBI:29103"/>
    </ligand>
</feature>
<feature type="binding site" description="in other chain" evidence="1">
    <location>
        <position position="57"/>
    </location>
    <ligand>
        <name>L-methionine</name>
        <dbReference type="ChEBI" id="CHEBI:57844"/>
        <note>ligand shared between two neighboring subunits</note>
    </ligand>
</feature>
<feature type="binding site" description="in other chain" evidence="1">
    <location>
        <position position="100"/>
    </location>
    <ligand>
        <name>L-methionine</name>
        <dbReference type="ChEBI" id="CHEBI:57844"/>
        <note>ligand shared between two neighboring subunits</note>
    </ligand>
</feature>
<feature type="binding site" description="in other chain" evidence="1">
    <location>
        <begin position="174"/>
        <end position="176"/>
    </location>
    <ligand>
        <name>ATP</name>
        <dbReference type="ChEBI" id="CHEBI:30616"/>
        <note>ligand shared between two neighboring subunits</note>
    </ligand>
</feature>
<feature type="binding site" description="in other chain" evidence="1">
    <location>
        <begin position="241"/>
        <end position="242"/>
    </location>
    <ligand>
        <name>ATP</name>
        <dbReference type="ChEBI" id="CHEBI:30616"/>
        <note>ligand shared between two neighboring subunits</note>
    </ligand>
</feature>
<feature type="binding site" evidence="1">
    <location>
        <position position="250"/>
    </location>
    <ligand>
        <name>ATP</name>
        <dbReference type="ChEBI" id="CHEBI:30616"/>
        <note>ligand shared between two neighboring subunits</note>
    </ligand>
</feature>
<feature type="binding site" evidence="1">
    <location>
        <position position="250"/>
    </location>
    <ligand>
        <name>L-methionine</name>
        <dbReference type="ChEBI" id="CHEBI:57844"/>
        <note>ligand shared between two neighboring subunits</note>
    </ligand>
</feature>
<feature type="binding site" description="in other chain" evidence="1">
    <location>
        <begin position="256"/>
        <end position="257"/>
    </location>
    <ligand>
        <name>ATP</name>
        <dbReference type="ChEBI" id="CHEBI:30616"/>
        <note>ligand shared between two neighboring subunits</note>
    </ligand>
</feature>
<feature type="binding site" evidence="1">
    <location>
        <position position="273"/>
    </location>
    <ligand>
        <name>ATP</name>
        <dbReference type="ChEBI" id="CHEBI:30616"/>
        <note>ligand shared between two neighboring subunits</note>
    </ligand>
</feature>
<feature type="binding site" evidence="1">
    <location>
        <position position="277"/>
    </location>
    <ligand>
        <name>ATP</name>
        <dbReference type="ChEBI" id="CHEBI:30616"/>
        <note>ligand shared between two neighboring subunits</note>
    </ligand>
</feature>
<feature type="binding site" description="in other chain" evidence="1">
    <location>
        <position position="281"/>
    </location>
    <ligand>
        <name>L-methionine</name>
        <dbReference type="ChEBI" id="CHEBI:57844"/>
        <note>ligand shared between two neighboring subunits</note>
    </ligand>
</feature>
<comment type="function">
    <text evidence="1">Catalyzes the formation of S-adenosylmethionine (AdoMet) from methionine and ATP. The overall synthetic reaction is composed of two sequential steps, AdoMet formation and the subsequent tripolyphosphate hydrolysis which occurs prior to release of AdoMet from the enzyme.</text>
</comment>
<comment type="catalytic activity">
    <reaction evidence="1">
        <text>L-methionine + ATP + H2O = S-adenosyl-L-methionine + phosphate + diphosphate</text>
        <dbReference type="Rhea" id="RHEA:21080"/>
        <dbReference type="ChEBI" id="CHEBI:15377"/>
        <dbReference type="ChEBI" id="CHEBI:30616"/>
        <dbReference type="ChEBI" id="CHEBI:33019"/>
        <dbReference type="ChEBI" id="CHEBI:43474"/>
        <dbReference type="ChEBI" id="CHEBI:57844"/>
        <dbReference type="ChEBI" id="CHEBI:59789"/>
        <dbReference type="EC" id="2.5.1.6"/>
    </reaction>
</comment>
<comment type="cofactor">
    <cofactor evidence="1">
        <name>Mg(2+)</name>
        <dbReference type="ChEBI" id="CHEBI:18420"/>
    </cofactor>
    <text evidence="1">Binds 2 divalent ions per subunit.</text>
</comment>
<comment type="cofactor">
    <cofactor evidence="1">
        <name>K(+)</name>
        <dbReference type="ChEBI" id="CHEBI:29103"/>
    </cofactor>
    <text evidence="1">Binds 1 potassium ion per subunit.</text>
</comment>
<comment type="pathway">
    <text evidence="1">Amino-acid biosynthesis; S-adenosyl-L-methionine biosynthesis; S-adenosyl-L-methionine from L-methionine: step 1/1.</text>
</comment>
<comment type="subunit">
    <text evidence="1">Homotetramer; dimer of dimers.</text>
</comment>
<comment type="subcellular location">
    <subcellularLocation>
        <location evidence="1">Cytoplasm</location>
    </subcellularLocation>
</comment>
<comment type="similarity">
    <text evidence="1">Belongs to the AdoMet synthase family.</text>
</comment>
<name>METK_PEDPA</name>
<keyword id="KW-0067">ATP-binding</keyword>
<keyword id="KW-0963">Cytoplasm</keyword>
<keyword id="KW-0460">Magnesium</keyword>
<keyword id="KW-0479">Metal-binding</keyword>
<keyword id="KW-0547">Nucleotide-binding</keyword>
<keyword id="KW-0554">One-carbon metabolism</keyword>
<keyword id="KW-0630">Potassium</keyword>
<keyword id="KW-0808">Transferase</keyword>
<accession>Q03GG8</accession>
<organism>
    <name type="scientific">Pediococcus pentosaceus (strain ATCC 25745 / CCUG 21536 / LMG 10740 / 183-1w)</name>
    <dbReference type="NCBI Taxonomy" id="278197"/>
    <lineage>
        <taxon>Bacteria</taxon>
        <taxon>Bacillati</taxon>
        <taxon>Bacillota</taxon>
        <taxon>Bacilli</taxon>
        <taxon>Lactobacillales</taxon>
        <taxon>Lactobacillaceae</taxon>
        <taxon>Pediococcus</taxon>
    </lineage>
</organism>
<gene>
    <name evidence="1" type="primary">metK</name>
    <name type="ordered locus">PEPE_0641</name>
</gene>
<protein>
    <recommendedName>
        <fullName evidence="1">S-adenosylmethionine synthase</fullName>
        <shortName evidence="1">AdoMet synthase</shortName>
        <ecNumber evidence="1">2.5.1.6</ecNumber>
    </recommendedName>
    <alternativeName>
        <fullName evidence="1">MAT</fullName>
    </alternativeName>
    <alternativeName>
        <fullName evidence="1">Methionine adenosyltransferase</fullName>
    </alternativeName>
</protein>